<dbReference type="EMBL" id="AF528058">
    <property type="protein sequence ID" value="AAM93427.1"/>
    <property type="molecule type" value="mRNA"/>
</dbReference>
<dbReference type="EMBL" id="AB018108">
    <property type="protein sequence ID" value="BAB11136.1"/>
    <property type="molecule type" value="Genomic_DNA"/>
</dbReference>
<dbReference type="EMBL" id="AL021684">
    <property type="protein sequence ID" value="CAA16674.1"/>
    <property type="status" value="ALT_SEQ"/>
    <property type="molecule type" value="Genomic_DNA"/>
</dbReference>
<dbReference type="EMBL" id="CP002688">
    <property type="protein sequence ID" value="AED98119.1"/>
    <property type="molecule type" value="Genomic_DNA"/>
</dbReference>
<dbReference type="EMBL" id="CP002688">
    <property type="protein sequence ID" value="ANM68752.1"/>
    <property type="molecule type" value="Genomic_DNA"/>
</dbReference>
<dbReference type="EMBL" id="AF360256">
    <property type="protein sequence ID" value="AAK25966.1"/>
    <property type="molecule type" value="mRNA"/>
</dbReference>
<dbReference type="EMBL" id="AY040070">
    <property type="protein sequence ID" value="AAK64128.1"/>
    <property type="molecule type" value="mRNA"/>
</dbReference>
<dbReference type="PIR" id="T05884">
    <property type="entry name" value="T05884"/>
</dbReference>
<dbReference type="RefSeq" id="NP_001330475.1">
    <molecule id="Q9FHP1-1"/>
    <property type="nucleotide sequence ID" value="NM_001345724.1"/>
</dbReference>
<dbReference type="RefSeq" id="NP_201390.1">
    <molecule id="Q9FHP1-1"/>
    <property type="nucleotide sequence ID" value="NM_125986.3"/>
</dbReference>
<dbReference type="FunCoup" id="Q9FHP1">
    <property type="interactions" value="122"/>
</dbReference>
<dbReference type="STRING" id="3702.Q9FHP1"/>
<dbReference type="PaxDb" id="3702-AT5G65890.1"/>
<dbReference type="ProteomicsDB" id="244793">
    <molecule id="Q9FHP1-1"/>
</dbReference>
<dbReference type="EnsemblPlants" id="AT5G65890.1">
    <molecule id="Q9FHP1-1"/>
    <property type="protein sequence ID" value="AT5G65890.1"/>
    <property type="gene ID" value="AT5G65890"/>
</dbReference>
<dbReference type="EnsemblPlants" id="AT5G65890.3">
    <molecule id="Q9FHP1-1"/>
    <property type="protein sequence ID" value="AT5G65890.3"/>
    <property type="gene ID" value="AT5G65890"/>
</dbReference>
<dbReference type="GeneID" id="836718"/>
<dbReference type="Gramene" id="AT5G65890.1">
    <molecule id="Q9FHP1-1"/>
    <property type="protein sequence ID" value="AT5G65890.1"/>
    <property type="gene ID" value="AT5G65890"/>
</dbReference>
<dbReference type="Gramene" id="AT5G65890.3">
    <molecule id="Q9FHP1-1"/>
    <property type="protein sequence ID" value="AT5G65890.3"/>
    <property type="gene ID" value="AT5G65890"/>
</dbReference>
<dbReference type="KEGG" id="ath:AT5G65890"/>
<dbReference type="Araport" id="AT5G65890"/>
<dbReference type="TAIR" id="AT5G65890">
    <property type="gene designation" value="ACR1"/>
</dbReference>
<dbReference type="eggNOG" id="ENOG502QQHS">
    <property type="taxonomic scope" value="Eukaryota"/>
</dbReference>
<dbReference type="HOGENOM" id="CLU_031332_3_0_1"/>
<dbReference type="InParanoid" id="Q9FHP1"/>
<dbReference type="OMA" id="GRSLTMF"/>
<dbReference type="PhylomeDB" id="Q9FHP1"/>
<dbReference type="PRO" id="PR:Q9FHP1"/>
<dbReference type="Proteomes" id="UP000006548">
    <property type="component" value="Chromosome 5"/>
</dbReference>
<dbReference type="ExpressionAtlas" id="Q9FHP1">
    <property type="expression patterns" value="baseline and differential"/>
</dbReference>
<dbReference type="GO" id="GO:0005634">
    <property type="term" value="C:nucleus"/>
    <property type="evidence" value="ECO:0000250"/>
    <property type="project" value="TAIR"/>
</dbReference>
<dbReference type="GO" id="GO:0016597">
    <property type="term" value="F:amino acid binding"/>
    <property type="evidence" value="ECO:0000250"/>
    <property type="project" value="TAIR"/>
</dbReference>
<dbReference type="CDD" id="cd04895">
    <property type="entry name" value="ACT_ACR_1"/>
    <property type="match status" value="1"/>
</dbReference>
<dbReference type="CDD" id="cd04925">
    <property type="entry name" value="ACT_ACR_2"/>
    <property type="match status" value="1"/>
</dbReference>
<dbReference type="CDD" id="cd04897">
    <property type="entry name" value="ACT_ACR_3"/>
    <property type="match status" value="1"/>
</dbReference>
<dbReference type="CDD" id="cd04926">
    <property type="entry name" value="ACT_ACR_4"/>
    <property type="match status" value="1"/>
</dbReference>
<dbReference type="Gene3D" id="3.30.70.260">
    <property type="match status" value="2"/>
</dbReference>
<dbReference type="InterPro" id="IPR040217">
    <property type="entry name" value="ACR1-12"/>
</dbReference>
<dbReference type="InterPro" id="IPR045865">
    <property type="entry name" value="ACT-like_dom_sf"/>
</dbReference>
<dbReference type="InterPro" id="IPR002912">
    <property type="entry name" value="ACT_dom"/>
</dbReference>
<dbReference type="PANTHER" id="PTHR31096:SF7">
    <property type="entry name" value="ACT DOMAIN-CONTAINING PROTEIN ACR1"/>
    <property type="match status" value="1"/>
</dbReference>
<dbReference type="PANTHER" id="PTHR31096">
    <property type="entry name" value="ACT DOMAIN-CONTAINING PROTEIN ACR4-RELATED"/>
    <property type="match status" value="1"/>
</dbReference>
<dbReference type="Pfam" id="PF01842">
    <property type="entry name" value="ACT"/>
    <property type="match status" value="1"/>
</dbReference>
<dbReference type="SUPFAM" id="SSF55021">
    <property type="entry name" value="ACT-like"/>
    <property type="match status" value="3"/>
</dbReference>
<dbReference type="PROSITE" id="PS51671">
    <property type="entry name" value="ACT"/>
    <property type="match status" value="3"/>
</dbReference>
<reference key="1">
    <citation type="journal article" date="2002" name="Plant Physiol.">
        <title>Molecular characterization of a novel gene family encoding ACT domain repeat proteins in Arabidopsis.</title>
        <authorList>
            <person name="Hsieh M.-H."/>
            <person name="Goodman H.M."/>
        </authorList>
    </citation>
    <scope>NUCLEOTIDE SEQUENCE [MRNA]</scope>
    <scope>FUNCTION</scope>
    <scope>SUBCELLULAR LOCATION</scope>
    <scope>TISSUE SPECIFICITY</scope>
    <scope>INDUCTION</scope>
    <scope>NUCLEAR LOCALIZATION SIGNAL</scope>
</reference>
<reference key="2">
    <citation type="journal article" date="2000" name="DNA Res.">
        <title>Structural analysis of Arabidopsis thaliana chromosome 5. X. Sequence features of the regions of 3,076,755 bp covered by sixty P1 and TAC clones.</title>
        <authorList>
            <person name="Sato S."/>
            <person name="Nakamura Y."/>
            <person name="Kaneko T."/>
            <person name="Katoh T."/>
            <person name="Asamizu E."/>
            <person name="Kotani H."/>
            <person name="Tabata S."/>
        </authorList>
    </citation>
    <scope>NUCLEOTIDE SEQUENCE [LARGE SCALE GENOMIC DNA]</scope>
    <source>
        <strain>cv. Columbia</strain>
    </source>
</reference>
<reference key="3">
    <citation type="journal article" date="2000" name="Nature">
        <title>Sequence and analysis of chromosome 5 of the plant Arabidopsis thaliana.</title>
        <authorList>
            <person name="Tabata S."/>
            <person name="Kaneko T."/>
            <person name="Nakamura Y."/>
            <person name="Kotani H."/>
            <person name="Kato T."/>
            <person name="Asamizu E."/>
            <person name="Miyajima N."/>
            <person name="Sasamoto S."/>
            <person name="Kimura T."/>
            <person name="Hosouchi T."/>
            <person name="Kawashima K."/>
            <person name="Kohara M."/>
            <person name="Matsumoto M."/>
            <person name="Matsuno A."/>
            <person name="Muraki A."/>
            <person name="Nakayama S."/>
            <person name="Nakazaki N."/>
            <person name="Naruo K."/>
            <person name="Okumura S."/>
            <person name="Shinpo S."/>
            <person name="Takeuchi C."/>
            <person name="Wada T."/>
            <person name="Watanabe A."/>
            <person name="Yamada M."/>
            <person name="Yasuda M."/>
            <person name="Sato S."/>
            <person name="de la Bastide M."/>
            <person name="Huang E."/>
            <person name="Spiegel L."/>
            <person name="Gnoj L."/>
            <person name="O'Shaughnessy A."/>
            <person name="Preston R."/>
            <person name="Habermann K."/>
            <person name="Murray J."/>
            <person name="Johnson D."/>
            <person name="Rohlfing T."/>
            <person name="Nelson J."/>
            <person name="Stoneking T."/>
            <person name="Pepin K."/>
            <person name="Spieth J."/>
            <person name="Sekhon M."/>
            <person name="Armstrong J."/>
            <person name="Becker M."/>
            <person name="Belter E."/>
            <person name="Cordum H."/>
            <person name="Cordes M."/>
            <person name="Courtney L."/>
            <person name="Courtney W."/>
            <person name="Dante M."/>
            <person name="Du H."/>
            <person name="Edwards J."/>
            <person name="Fryman J."/>
            <person name="Haakensen B."/>
            <person name="Lamar E."/>
            <person name="Latreille P."/>
            <person name="Leonard S."/>
            <person name="Meyer R."/>
            <person name="Mulvaney E."/>
            <person name="Ozersky P."/>
            <person name="Riley A."/>
            <person name="Strowmatt C."/>
            <person name="Wagner-McPherson C."/>
            <person name="Wollam A."/>
            <person name="Yoakum M."/>
            <person name="Bell M."/>
            <person name="Dedhia N."/>
            <person name="Parnell L."/>
            <person name="Shah R."/>
            <person name="Rodriguez M."/>
            <person name="Hoon See L."/>
            <person name="Vil D."/>
            <person name="Baker J."/>
            <person name="Kirchoff K."/>
            <person name="Toth K."/>
            <person name="King L."/>
            <person name="Bahret A."/>
            <person name="Miller B."/>
            <person name="Marra M.A."/>
            <person name="Martienssen R."/>
            <person name="McCombie W.R."/>
            <person name="Wilson R.K."/>
            <person name="Murphy G."/>
            <person name="Bancroft I."/>
            <person name="Volckaert G."/>
            <person name="Wambutt R."/>
            <person name="Duesterhoeft A."/>
            <person name="Stiekema W."/>
            <person name="Pohl T."/>
            <person name="Entian K.-D."/>
            <person name="Terryn N."/>
            <person name="Hartley N."/>
            <person name="Bent E."/>
            <person name="Johnson S."/>
            <person name="Langham S.-A."/>
            <person name="McCullagh B."/>
            <person name="Robben J."/>
            <person name="Grymonprez B."/>
            <person name="Zimmermann W."/>
            <person name="Ramsperger U."/>
            <person name="Wedler H."/>
            <person name="Balke K."/>
            <person name="Wedler E."/>
            <person name="Peters S."/>
            <person name="van Staveren M."/>
            <person name="Dirkse W."/>
            <person name="Mooijman P."/>
            <person name="Klein Lankhorst R."/>
            <person name="Weitzenegger T."/>
            <person name="Bothe G."/>
            <person name="Rose M."/>
            <person name="Hauf J."/>
            <person name="Berneiser S."/>
            <person name="Hempel S."/>
            <person name="Feldpausch M."/>
            <person name="Lamberth S."/>
            <person name="Villarroel R."/>
            <person name="Gielen J."/>
            <person name="Ardiles W."/>
            <person name="Bents O."/>
            <person name="Lemcke K."/>
            <person name="Kolesov G."/>
            <person name="Mayer K.F.X."/>
            <person name="Rudd S."/>
            <person name="Schoof H."/>
            <person name="Schueller C."/>
            <person name="Zaccaria P."/>
            <person name="Mewes H.-W."/>
            <person name="Bevan M."/>
            <person name="Fransz P.F."/>
        </authorList>
    </citation>
    <scope>NUCLEOTIDE SEQUENCE [LARGE SCALE GENOMIC DNA]</scope>
    <source>
        <strain>cv. Columbia</strain>
    </source>
</reference>
<reference key="4">
    <citation type="journal article" date="2017" name="Plant J.">
        <title>Araport11: a complete reannotation of the Arabidopsis thaliana reference genome.</title>
        <authorList>
            <person name="Cheng C.Y."/>
            <person name="Krishnakumar V."/>
            <person name="Chan A.P."/>
            <person name="Thibaud-Nissen F."/>
            <person name="Schobel S."/>
            <person name="Town C.D."/>
        </authorList>
    </citation>
    <scope>GENOME REANNOTATION</scope>
    <source>
        <strain>cv. Columbia</strain>
    </source>
</reference>
<reference key="5">
    <citation type="journal article" date="2003" name="Science">
        <title>Empirical analysis of transcriptional activity in the Arabidopsis genome.</title>
        <authorList>
            <person name="Yamada K."/>
            <person name="Lim J."/>
            <person name="Dale J.M."/>
            <person name="Chen H."/>
            <person name="Shinn P."/>
            <person name="Palm C.J."/>
            <person name="Southwick A.M."/>
            <person name="Wu H.C."/>
            <person name="Kim C.J."/>
            <person name="Nguyen M."/>
            <person name="Pham P.K."/>
            <person name="Cheuk R.F."/>
            <person name="Karlin-Newmann G."/>
            <person name="Liu S.X."/>
            <person name="Lam B."/>
            <person name="Sakano H."/>
            <person name="Wu T."/>
            <person name="Yu G."/>
            <person name="Miranda M."/>
            <person name="Quach H.L."/>
            <person name="Tripp M."/>
            <person name="Chang C.H."/>
            <person name="Lee J.M."/>
            <person name="Toriumi M.J."/>
            <person name="Chan M.M."/>
            <person name="Tang C.C."/>
            <person name="Onodera C.S."/>
            <person name="Deng J.M."/>
            <person name="Akiyama K."/>
            <person name="Ansari Y."/>
            <person name="Arakawa T."/>
            <person name="Banh J."/>
            <person name="Banno F."/>
            <person name="Bowser L."/>
            <person name="Brooks S.Y."/>
            <person name="Carninci P."/>
            <person name="Chao Q."/>
            <person name="Choy N."/>
            <person name="Enju A."/>
            <person name="Goldsmith A.D."/>
            <person name="Gurjal M."/>
            <person name="Hansen N.F."/>
            <person name="Hayashizaki Y."/>
            <person name="Johnson-Hopson C."/>
            <person name="Hsuan V.W."/>
            <person name="Iida K."/>
            <person name="Karnes M."/>
            <person name="Khan S."/>
            <person name="Koesema E."/>
            <person name="Ishida J."/>
            <person name="Jiang P.X."/>
            <person name="Jones T."/>
            <person name="Kawai J."/>
            <person name="Kamiya A."/>
            <person name="Meyers C."/>
            <person name="Nakajima M."/>
            <person name="Narusaka M."/>
            <person name="Seki M."/>
            <person name="Sakurai T."/>
            <person name="Satou M."/>
            <person name="Tamse R."/>
            <person name="Vaysberg M."/>
            <person name="Wallender E.K."/>
            <person name="Wong C."/>
            <person name="Yamamura Y."/>
            <person name="Yuan S."/>
            <person name="Shinozaki K."/>
            <person name="Davis R.W."/>
            <person name="Theologis A."/>
            <person name="Ecker J.R."/>
        </authorList>
    </citation>
    <scope>NUCLEOTIDE SEQUENCE [LARGE SCALE MRNA]</scope>
    <source>
        <strain>cv. Columbia</strain>
    </source>
</reference>
<gene>
    <name evidence="3" type="primary">ACR1</name>
    <name evidence="6" type="ordered locus">At5g65890</name>
    <name evidence="8" type="ORF">F6H11.30</name>
    <name evidence="7" type="ORF">K14B20.6</name>
</gene>
<keyword id="KW-0025">Alternative splicing</keyword>
<keyword id="KW-0539">Nucleus</keyword>
<keyword id="KW-1185">Reference proteome</keyword>
<keyword id="KW-0677">Repeat</keyword>
<sequence length="477" mass="52977">MMEIAYQPRIDSEIESLVERINPPRVCVDNDSDPECTLIKVDSANKYGILLDMVQVLADLDLVISKCYISSDGEWFMDVFHVTDQLGNKLTDRSLILYIQQAICSSRTGGITKEMQSNLKREVQQRHVSTEHTAFEITGINRPGLLSEISAVLSDIGCHVTAAVAWTHHERAAMVIYLEDGFNGGPIIDPIRKAQVKDHLDTVMEAHHIVGDVSHVVVRVVEAKGVPVGWAHTERRLHELMYGEGDYENCFDCDCFGDRCDALWRGRCERIHVTIEACNGYSMVNVKCRDRPKLLFDTVCALKELQFVVFHAVAGAKGSTAEQEYFIRKKNGGTLETEGQRERLRHCLVAAISRRASQGLKLEIRTENKMGLLSDVTRVVRENGLSITRAEMCTQGEIAVGSFYVTDVNGGETGPSEVEAVVRELGGAVVSAVKGVGMMPRRIGSTSDSVEQDKAKSSIGRMFWSKLERLSTSIRSL</sequence>
<proteinExistence type="evidence at transcript level"/>
<name>ACR1_ARATH</name>
<evidence type="ECO:0000255" key="1">
    <source>
        <dbReference type="PROSITE-ProRule" id="PRU01007"/>
    </source>
</evidence>
<evidence type="ECO:0000269" key="2">
    <source>
    </source>
</evidence>
<evidence type="ECO:0000303" key="3">
    <source>
    </source>
</evidence>
<evidence type="ECO:0000305" key="4"/>
<evidence type="ECO:0000305" key="5">
    <source>
    </source>
</evidence>
<evidence type="ECO:0000312" key="6">
    <source>
        <dbReference type="Araport" id="AT5G65890"/>
    </source>
</evidence>
<evidence type="ECO:0000312" key="7">
    <source>
        <dbReference type="EMBL" id="BAB11136.1"/>
    </source>
</evidence>
<evidence type="ECO:0000312" key="8">
    <source>
        <dbReference type="EMBL" id="CAA16674.1"/>
    </source>
</evidence>
<accession>Q9FHP1</accession>
<accession>O49531</accession>
<comment type="function">
    <text evidence="3">May bind amino acids.</text>
</comment>
<comment type="subcellular location">
    <subcellularLocation>
        <location evidence="3">Nucleus</location>
    </subcellularLocation>
</comment>
<comment type="alternative products">
    <event type="alternative splicing"/>
    <isoform>
        <id>Q9FHP1-1</id>
        <name>1</name>
        <sequence type="displayed"/>
    </isoform>
    <text>A number of isoforms are produced. According to EST sequences.</text>
</comment>
<comment type="tissue specificity">
    <text evidence="2">Expressed in flowers and siliques.</text>
</comment>
<comment type="induction">
    <text evidence="2">By cold stress. Down-regulated by salt stress.</text>
</comment>
<comment type="sequence caution" evidence="4">
    <conflict type="erroneous gene model prediction">
        <sequence resource="EMBL-CDS" id="CAA16674"/>
    </conflict>
</comment>
<feature type="chain" id="PRO_0000431455" description="ACT domain-containing protein ACR1">
    <location>
        <begin position="1"/>
        <end position="477"/>
    </location>
</feature>
<feature type="domain" description="ACT 1" evidence="1">
    <location>
        <begin position="38"/>
        <end position="124"/>
    </location>
</feature>
<feature type="domain" description="ACT 2" evidence="1">
    <location>
        <begin position="134"/>
        <end position="214"/>
    </location>
</feature>
<feature type="domain" description="ACT 3" evidence="5">
    <location>
        <begin position="283"/>
        <end position="358"/>
    </location>
</feature>
<feature type="domain" description="ACT 4" evidence="1">
    <location>
        <begin position="361"/>
        <end position="441"/>
    </location>
</feature>
<feature type="short sequence motif" description="Bipartite nuclear localization signal" evidence="3">
    <location>
        <begin position="329"/>
        <end position="345"/>
    </location>
</feature>
<protein>
    <recommendedName>
        <fullName evidence="4">ACT domain-containing protein ACR1</fullName>
    </recommendedName>
    <alternativeName>
        <fullName evidence="3">Protein ACT DOMAIN REPEATS 1</fullName>
    </alternativeName>
</protein>
<organism>
    <name type="scientific">Arabidopsis thaliana</name>
    <name type="common">Mouse-ear cress</name>
    <dbReference type="NCBI Taxonomy" id="3702"/>
    <lineage>
        <taxon>Eukaryota</taxon>
        <taxon>Viridiplantae</taxon>
        <taxon>Streptophyta</taxon>
        <taxon>Embryophyta</taxon>
        <taxon>Tracheophyta</taxon>
        <taxon>Spermatophyta</taxon>
        <taxon>Magnoliopsida</taxon>
        <taxon>eudicotyledons</taxon>
        <taxon>Gunneridae</taxon>
        <taxon>Pentapetalae</taxon>
        <taxon>rosids</taxon>
        <taxon>malvids</taxon>
        <taxon>Brassicales</taxon>
        <taxon>Brassicaceae</taxon>
        <taxon>Camelineae</taxon>
        <taxon>Arabidopsis</taxon>
    </lineage>
</organism>